<sequence length="777" mass="88077">MEEPGATPQPYLGLVLEELRRVVAALPESMRPDENPYGFPSELVVCAAVIGFFVVLLFLWRSFRSVRSRLYVGREQKLGATLSGLIEEKCKLLEKFSLIQKEYEGYEVESSLEDASFEKAAAEEARSLEATCEKLNRSNSELEDEILCLEKDLKEEKSKHSQQDELMADISKSIQSLEDESKSLKSQIAEAKIICKTFKMSEERRAIAIKDALNENSQLQTSHKQLFQQEAEVWKGQVSELNKQKITFEDSKVHAEQVLNDKENHIKTLTGHLPMMKDQAAVLEEDTTDDDNLELEVNSQWENGANLDDPLKGALKKLIHAAKLNVSLKSLEGERNHIIIQLSEVDKTKEELTEHIKNLQTQQASLQSENIYFESENQKLQQKLKIMTEFYQENEMKLYRKLTVEENYRIEEEEKLSRVEEKISRATEGLETYRKLAKDLEEELERTVHFYQKQVISYEKRGHDNWLAARTAERNLSDLRKENAHNKQKLTETELKFELLEKDPNALDVSNTAFGREHSPCSPSPLGRPSSETRAFPSPQTLLEDPLRLSPVLPGGGGRGPSSPGNPLDHQITNERGEPSYDRLIDPHRAPSDTGSLSSPVEQDRRMMFPPPGQSYPDSTLPPQREDRFYSNSERLSGPAEPRSFKMTSLDKMDRSMPSEMESSRNDAKDDLGNLNVPDSSLPAENEATGPGFIPPPLAPVRGPLFPVDTRGPFMRRGPPFPPPPPGTMFGASRGYFPPRDFPGPPHAPFAMRNIYPPRGLPPYLHPRPGFYPNPTF</sequence>
<gene>
    <name type="primary">CTAGE8</name>
</gene>
<reference key="1">
    <citation type="journal article" date="2003" name="Nature">
        <title>The DNA sequence of human chromosome 7.</title>
        <authorList>
            <person name="Hillier L.W."/>
            <person name="Fulton R.S."/>
            <person name="Fulton L.A."/>
            <person name="Graves T.A."/>
            <person name="Pepin K.H."/>
            <person name="Wagner-McPherson C."/>
            <person name="Layman D."/>
            <person name="Maas J."/>
            <person name="Jaeger S."/>
            <person name="Walker R."/>
            <person name="Wylie K."/>
            <person name="Sekhon M."/>
            <person name="Becker M.C."/>
            <person name="O'Laughlin M.D."/>
            <person name="Schaller M.E."/>
            <person name="Fewell G.A."/>
            <person name="Delehaunty K.D."/>
            <person name="Miner T.L."/>
            <person name="Nash W.E."/>
            <person name="Cordes M."/>
            <person name="Du H."/>
            <person name="Sun H."/>
            <person name="Edwards J."/>
            <person name="Bradshaw-Cordum H."/>
            <person name="Ali J."/>
            <person name="Andrews S."/>
            <person name="Isak A."/>
            <person name="Vanbrunt A."/>
            <person name="Nguyen C."/>
            <person name="Du F."/>
            <person name="Lamar B."/>
            <person name="Courtney L."/>
            <person name="Kalicki J."/>
            <person name="Ozersky P."/>
            <person name="Bielicki L."/>
            <person name="Scott K."/>
            <person name="Holmes A."/>
            <person name="Harkins R."/>
            <person name="Harris A."/>
            <person name="Strong C.M."/>
            <person name="Hou S."/>
            <person name="Tomlinson C."/>
            <person name="Dauphin-Kohlberg S."/>
            <person name="Kozlowicz-Reilly A."/>
            <person name="Leonard S."/>
            <person name="Rohlfing T."/>
            <person name="Rock S.M."/>
            <person name="Tin-Wollam A.-M."/>
            <person name="Abbott A."/>
            <person name="Minx P."/>
            <person name="Maupin R."/>
            <person name="Strowmatt C."/>
            <person name="Latreille P."/>
            <person name="Miller N."/>
            <person name="Johnson D."/>
            <person name="Murray J."/>
            <person name="Woessner J.P."/>
            <person name="Wendl M.C."/>
            <person name="Yang S.-P."/>
            <person name="Schultz B.R."/>
            <person name="Wallis J.W."/>
            <person name="Spieth J."/>
            <person name="Bieri T.A."/>
            <person name="Nelson J.O."/>
            <person name="Berkowicz N."/>
            <person name="Wohldmann P.E."/>
            <person name="Cook L.L."/>
            <person name="Hickenbotham M.T."/>
            <person name="Eldred J."/>
            <person name="Williams D."/>
            <person name="Bedell J.A."/>
            <person name="Mardis E.R."/>
            <person name="Clifton S.W."/>
            <person name="Chissoe S.L."/>
            <person name="Marra M.A."/>
            <person name="Raymond C."/>
            <person name="Haugen E."/>
            <person name="Gillett W."/>
            <person name="Zhou Y."/>
            <person name="James R."/>
            <person name="Phelps K."/>
            <person name="Iadanoto S."/>
            <person name="Bubb K."/>
            <person name="Simms E."/>
            <person name="Levy R."/>
            <person name="Clendenning J."/>
            <person name="Kaul R."/>
            <person name="Kent W.J."/>
            <person name="Furey T.S."/>
            <person name="Baertsch R.A."/>
            <person name="Brent M.R."/>
            <person name="Keibler E."/>
            <person name="Flicek P."/>
            <person name="Bork P."/>
            <person name="Suyama M."/>
            <person name="Bailey J.A."/>
            <person name="Portnoy M.E."/>
            <person name="Torrents D."/>
            <person name="Chinwalla A.T."/>
            <person name="Gish W.R."/>
            <person name="Eddy S.R."/>
            <person name="McPherson J.D."/>
            <person name="Olson M.V."/>
            <person name="Eichler E.E."/>
            <person name="Green E.D."/>
            <person name="Waterston R.H."/>
            <person name="Wilson R.K."/>
        </authorList>
    </citation>
    <scope>NUCLEOTIDE SEQUENCE [LARGE SCALE GENOMIC DNA]</scope>
</reference>
<organism>
    <name type="scientific">Homo sapiens</name>
    <name type="common">Human</name>
    <dbReference type="NCBI Taxonomy" id="9606"/>
    <lineage>
        <taxon>Eukaryota</taxon>
        <taxon>Metazoa</taxon>
        <taxon>Chordata</taxon>
        <taxon>Craniata</taxon>
        <taxon>Vertebrata</taxon>
        <taxon>Euteleostomi</taxon>
        <taxon>Mammalia</taxon>
        <taxon>Eutheria</taxon>
        <taxon>Euarchontoglires</taxon>
        <taxon>Primates</taxon>
        <taxon>Haplorrhini</taxon>
        <taxon>Catarrhini</taxon>
        <taxon>Hominidae</taxon>
        <taxon>Homo</taxon>
    </lineage>
</organism>
<name>CTGE8_HUMAN</name>
<keyword id="KW-0175">Coiled coil</keyword>
<keyword id="KW-0472">Membrane</keyword>
<keyword id="KW-1185">Reference proteome</keyword>
<keyword id="KW-0812">Transmembrane</keyword>
<keyword id="KW-1133">Transmembrane helix</keyword>
<proteinExistence type="inferred from homology"/>
<protein>
    <recommendedName>
        <fullName>cTAGE family member 8</fullName>
        <shortName>Protein cTAGE-8</shortName>
    </recommendedName>
</protein>
<accession>P0CG41</accession>
<feature type="chain" id="PRO_0000395454" description="cTAGE family member 8">
    <location>
        <begin position="1"/>
        <end position="777"/>
    </location>
</feature>
<feature type="transmembrane region" description="Helical" evidence="1">
    <location>
        <begin position="39"/>
        <end position="59"/>
    </location>
</feature>
<feature type="region of interest" description="Disordered" evidence="2">
    <location>
        <begin position="510"/>
        <end position="673"/>
    </location>
</feature>
<feature type="region of interest" description="Disordered" evidence="2">
    <location>
        <begin position="721"/>
        <end position="742"/>
    </location>
</feature>
<feature type="coiled-coil region" evidence="1">
    <location>
        <begin position="118"/>
        <end position="269"/>
    </location>
</feature>
<feature type="coiled-coil region" evidence="1">
    <location>
        <begin position="339"/>
        <end position="498"/>
    </location>
</feature>
<feature type="compositionally biased region" description="Polar residues" evidence="2">
    <location>
        <begin position="530"/>
        <end position="541"/>
    </location>
</feature>
<feature type="compositionally biased region" description="Basic and acidic residues" evidence="2">
    <location>
        <begin position="572"/>
        <end position="591"/>
    </location>
</feature>
<feature type="compositionally biased region" description="Basic and acidic residues" evidence="2">
    <location>
        <begin position="649"/>
        <end position="672"/>
    </location>
</feature>
<dbReference type="EMBL" id="AC004889">
    <property type="status" value="NOT_ANNOTATED_CDS"/>
    <property type="molecule type" value="Genomic_DNA"/>
</dbReference>
<dbReference type="CCDS" id="CCDS64791.1"/>
<dbReference type="RefSeq" id="NP_001265436.1">
    <property type="nucleotide sequence ID" value="NM_001278507.2"/>
</dbReference>
<dbReference type="SMR" id="P0CG41"/>
<dbReference type="BioGRID" id="936688">
    <property type="interactions" value="6"/>
</dbReference>
<dbReference type="FunCoup" id="P0CG41">
    <property type="interactions" value="144"/>
</dbReference>
<dbReference type="IntAct" id="P0CG41">
    <property type="interactions" value="1"/>
</dbReference>
<dbReference type="STRING" id="9606.ENSP00000417289"/>
<dbReference type="iPTMnet" id="P0CG41"/>
<dbReference type="PhosphoSitePlus" id="P0CG41"/>
<dbReference type="BioMuta" id="CTAGE8"/>
<dbReference type="DMDM" id="300680906"/>
<dbReference type="jPOST" id="P0CG41"/>
<dbReference type="MassIVE" id="P0CG41"/>
<dbReference type="PaxDb" id="9606-ENSP00000417289"/>
<dbReference type="PeptideAtlas" id="P0CG41"/>
<dbReference type="Antibodypedia" id="32719">
    <property type="antibodies" value="2 antibodies from 2 providers"/>
</dbReference>
<dbReference type="DNASU" id="100142659"/>
<dbReference type="Ensembl" id="ENST00000487179.2">
    <property type="protein sequence ID" value="ENSP00000417289.1"/>
    <property type="gene ID" value="ENSG00000289604.1"/>
</dbReference>
<dbReference type="Ensembl" id="ENST00000672571.1">
    <property type="protein sequence ID" value="ENSP00000500005.1"/>
    <property type="gene ID" value="ENSG00000288181.1"/>
</dbReference>
<dbReference type="Ensembl" id="ENST00000672823.1">
    <property type="protein sequence ID" value="ENSP00000500425.1"/>
    <property type="gene ID" value="ENSG00000288181.1"/>
</dbReference>
<dbReference type="GeneID" id="100142659"/>
<dbReference type="KEGG" id="hsa:100142659"/>
<dbReference type="MANE-Select" id="ENST00000487179.2">
    <property type="protein sequence ID" value="ENSP00000417289.1"/>
    <property type="RefSeq nucleotide sequence ID" value="NM_001278507.2"/>
    <property type="RefSeq protein sequence ID" value="NP_001265436.1"/>
</dbReference>
<dbReference type="UCSC" id="uc010lpe.5">
    <property type="organism name" value="human"/>
</dbReference>
<dbReference type="AGR" id="HGNC:37294"/>
<dbReference type="CTD" id="100142659"/>
<dbReference type="GeneCards" id="CTAGE8"/>
<dbReference type="HGNC" id="HGNC:37294">
    <property type="gene designation" value="CTAGE8"/>
</dbReference>
<dbReference type="HPA" id="ENSG00000289604">
    <property type="expression patterns" value="Tissue enhanced (skin, thyroid gland)"/>
</dbReference>
<dbReference type="neXtProt" id="NX_P0CG41"/>
<dbReference type="VEuPathDB" id="HostDB:ENSG00000244693"/>
<dbReference type="eggNOG" id="ENOG502QUND">
    <property type="taxonomic scope" value="Eukaryota"/>
</dbReference>
<dbReference type="GeneTree" id="ENSGT00950000182767"/>
<dbReference type="HOGENOM" id="CLU_002106_2_0_1"/>
<dbReference type="InParanoid" id="P0CG41"/>
<dbReference type="OMA" id="PYGFPWD"/>
<dbReference type="OrthoDB" id="3548878at2759"/>
<dbReference type="PAN-GO" id="P0CG41">
    <property type="GO annotations" value="5 GO annotations based on evolutionary models"/>
</dbReference>
<dbReference type="PhylomeDB" id="P0CG41"/>
<dbReference type="TreeFam" id="TF333137"/>
<dbReference type="PathwayCommons" id="P0CG41"/>
<dbReference type="BioGRID-ORCS" id="100142659">
    <property type="hits" value="53 hits in 211 CRISPR screens"/>
</dbReference>
<dbReference type="GenomeRNAi" id="100142659"/>
<dbReference type="Pharos" id="P0CG41">
    <property type="development level" value="Tdark"/>
</dbReference>
<dbReference type="PRO" id="PR:P0CG41"/>
<dbReference type="Proteomes" id="UP000005640">
    <property type="component" value="Chromosome 7"/>
</dbReference>
<dbReference type="RNAct" id="P0CG41">
    <property type="molecule type" value="protein"/>
</dbReference>
<dbReference type="Bgee" id="ENSG00000244693">
    <property type="expression patterns" value="Expressed in male germ line stem cell (sensu Vertebrata) in testis and 84 other cell types or tissues"/>
</dbReference>
<dbReference type="GO" id="GO:0070971">
    <property type="term" value="C:endoplasmic reticulum exit site"/>
    <property type="evidence" value="ECO:0000318"/>
    <property type="project" value="GO_Central"/>
</dbReference>
<dbReference type="GO" id="GO:0005789">
    <property type="term" value="C:endoplasmic reticulum membrane"/>
    <property type="evidence" value="ECO:0000318"/>
    <property type="project" value="GO_Central"/>
</dbReference>
<dbReference type="GO" id="GO:0006888">
    <property type="term" value="P:endoplasmic reticulum to Golgi vesicle-mediated transport"/>
    <property type="evidence" value="ECO:0000318"/>
    <property type="project" value="GO_Central"/>
</dbReference>
<dbReference type="GO" id="GO:0009306">
    <property type="term" value="P:protein secretion"/>
    <property type="evidence" value="ECO:0000318"/>
    <property type="project" value="GO_Central"/>
</dbReference>
<dbReference type="GO" id="GO:0035459">
    <property type="term" value="P:vesicle cargo loading"/>
    <property type="evidence" value="ECO:0000318"/>
    <property type="project" value="GO_Central"/>
</dbReference>
<dbReference type="FunFam" id="1.20.5.340:FF:000044">
    <property type="entry name" value="MIA SH3 domain ER export factor 2"/>
    <property type="match status" value="1"/>
</dbReference>
<dbReference type="InterPro" id="IPR051500">
    <property type="entry name" value="cTAGE_MIA/OTOR"/>
</dbReference>
<dbReference type="PANTHER" id="PTHR23158:SF57">
    <property type="entry name" value="CTAGE FAMILY MEMBER 15-RELATED"/>
    <property type="match status" value="1"/>
</dbReference>
<dbReference type="PANTHER" id="PTHR23158">
    <property type="entry name" value="MELANOMA INHIBITORY ACTIVITY-RELATED"/>
    <property type="match status" value="1"/>
</dbReference>
<comment type="subcellular location">
    <subcellularLocation>
        <location evidence="3">Membrane</location>
        <topology evidence="3">Single-pass membrane protein</topology>
    </subcellularLocation>
</comment>
<comment type="similarity">
    <text evidence="3">Belongs to the cTAGE family.</text>
</comment>
<evidence type="ECO:0000255" key="1"/>
<evidence type="ECO:0000256" key="2">
    <source>
        <dbReference type="SAM" id="MobiDB-lite"/>
    </source>
</evidence>
<evidence type="ECO:0000305" key="3"/>